<gene>
    <name type="primary">omcB</name>
    <name type="ordered locus">JALI_4441</name>
</gene>
<proteinExistence type="inferred from homology"/>
<sequence length="547" mass="58694">MNKLIRRAVTIFAVTSVASLFASGVLETSMAESLSTNVISLADTKAKDNTSHKSKKARKNHSKETPVDRKEVAPVHESKATGPKQDSCFGRMYTVKVNDDRNVEITQAVPEYATVGSPYPIEITATGKRDCVDVIITQQLPCEAEFVRSDPATTPTADGKLVWKIDRLGQGEKSKITVWVKPLKEGCCFTAATVCACPEIRSVTKCGQPAICVKQEGPENACLRCPVVYKINIVNQGTATARNVVVENPVPDGYAHSSGQRVLTFTLGDMQPGEHRTITVEFCPLKRGRATNIATVSYCGGHKNTASVTTVINEPCVQVSIAGADWSYVCKPVEYVISVSNPGDLVLRDVVVEDTLSPGVTVLEAAGAQISCNKVVWTVKELNPGESLQYKVLVRAQTPGQFTNNVVVKSCSDCGTCTSCAEATTYWKGVAATHMCVVDTCDPVCVGENTVYRICVTNRGSAEDTNVSLMLKFSKELQPVSFSGPTKGTITGNTVVFDSLPRLGSKETVEFSVTLKAVSAGDARGEAILSSDTLTVPVSDTENTHIY</sequence>
<feature type="signal peptide" evidence="2">
    <location>
        <begin position="1"/>
        <end position="22"/>
    </location>
</feature>
<feature type="propeptide" id="PRO_0000389549" evidence="2">
    <location>
        <begin position="23"/>
        <end position="40"/>
    </location>
</feature>
<feature type="chain" id="PRO_0000389550" description="Large cysteine-rich periplasmic protein OmcB">
    <location>
        <begin position="41"/>
        <end position="547"/>
    </location>
</feature>
<feature type="region of interest" description="Disordered" evidence="3">
    <location>
        <begin position="45"/>
        <end position="84"/>
    </location>
</feature>
<feature type="compositionally biased region" description="Basic residues" evidence="3">
    <location>
        <begin position="52"/>
        <end position="61"/>
    </location>
</feature>
<feature type="compositionally biased region" description="Basic and acidic residues" evidence="3">
    <location>
        <begin position="62"/>
        <end position="79"/>
    </location>
</feature>
<protein>
    <recommendedName>
        <fullName>Large cysteine-rich periplasmic protein OmcB</fullName>
        <shortName>Large-CRP</shortName>
    </recommendedName>
    <alternativeName>
        <fullName>60 kDa cysteine-rich OMP</fullName>
    </alternativeName>
    <alternativeName>
        <fullName>60 kDa outer membrane protein</fullName>
    </alternativeName>
    <alternativeName>
        <fullName>Cysteine-rich outer membrane protein</fullName>
        <shortName>CRP</shortName>
    </alternativeName>
</protein>
<name>OMCB_CHLTJ</name>
<dbReference type="EMBL" id="X53510">
    <property type="protein sequence ID" value="CAA37588.1"/>
    <property type="molecule type" value="Genomic_DNA"/>
</dbReference>
<dbReference type="EMBL" id="FM872308">
    <property type="protein sequence ID" value="CAX10898.1"/>
    <property type="status" value="ALT_INIT"/>
    <property type="molecule type" value="Genomic_DNA"/>
</dbReference>
<dbReference type="PIR" id="D71515">
    <property type="entry name" value="D71515"/>
</dbReference>
<dbReference type="RefSeq" id="WP_009872660.1">
    <property type="nucleotide sequence ID" value="NC_012686.1"/>
</dbReference>
<dbReference type="KEGG" id="ctj:JALI_4441"/>
<dbReference type="HOGENOM" id="CLU_029611_0_0_0"/>
<dbReference type="GO" id="GO:0042597">
    <property type="term" value="C:periplasmic space"/>
    <property type="evidence" value="ECO:0007669"/>
    <property type="project" value="UniProtKB-SubCell"/>
</dbReference>
<dbReference type="GO" id="GO:0005201">
    <property type="term" value="F:extracellular matrix structural constituent"/>
    <property type="evidence" value="ECO:0007669"/>
    <property type="project" value="InterPro"/>
</dbReference>
<dbReference type="GO" id="GO:0008360">
    <property type="term" value="P:regulation of cell shape"/>
    <property type="evidence" value="ECO:0007669"/>
    <property type="project" value="UniProtKB-KW"/>
</dbReference>
<dbReference type="Gene3D" id="2.60.40.10">
    <property type="entry name" value="Immunoglobulins"/>
    <property type="match status" value="1"/>
</dbReference>
<dbReference type="InterPro" id="IPR003506">
    <property type="entry name" value="Chlam_OMP6"/>
</dbReference>
<dbReference type="InterPro" id="IPR051172">
    <property type="entry name" value="Chlamydia_OmcB"/>
</dbReference>
<dbReference type="InterPro" id="IPR047589">
    <property type="entry name" value="DUF11_rpt"/>
</dbReference>
<dbReference type="InterPro" id="IPR013783">
    <property type="entry name" value="Ig-like_fold"/>
</dbReference>
<dbReference type="InterPro" id="IPR001434">
    <property type="entry name" value="OmcB-like_DUF11"/>
</dbReference>
<dbReference type="NCBIfam" id="TIGR01451">
    <property type="entry name" value="B_ant_repeat"/>
    <property type="match status" value="1"/>
</dbReference>
<dbReference type="PANTHER" id="PTHR34819">
    <property type="entry name" value="LARGE CYSTEINE-RICH PERIPLASMIC PROTEIN OMCB"/>
    <property type="match status" value="1"/>
</dbReference>
<dbReference type="PANTHER" id="PTHR34819:SF4">
    <property type="entry name" value="LARGE CYSTEINE-RICH PERIPLASMIC PROTEIN OMCB"/>
    <property type="match status" value="1"/>
</dbReference>
<dbReference type="Pfam" id="PF03504">
    <property type="entry name" value="Chlam_OMP6"/>
    <property type="match status" value="1"/>
</dbReference>
<dbReference type="Pfam" id="PF01345">
    <property type="entry name" value="DUF11"/>
    <property type="match status" value="3"/>
</dbReference>
<dbReference type="PRINTS" id="PR01336">
    <property type="entry name" value="CHLAMIDIAOM6"/>
</dbReference>
<evidence type="ECO:0000250" key="1"/>
<evidence type="ECO:0000255" key="2"/>
<evidence type="ECO:0000256" key="3">
    <source>
        <dbReference type="SAM" id="MobiDB-lite"/>
    </source>
</evidence>
<evidence type="ECO:0000305" key="4"/>
<keyword id="KW-0133">Cell shape</keyword>
<keyword id="KW-1015">Disulfide bond</keyword>
<keyword id="KW-0574">Periplasm</keyword>
<keyword id="KW-0732">Signal</keyword>
<comment type="function">
    <text evidence="1">In elementary bodies (EBs, the infectious stage, which is able to survive outside the host cell) provides the structural integrity of the outer envelope through disulfide cross-links with the small cysteine-rich protein and the major outer membrane protein. It has been described in publications as the Sarkosyl-insoluble COMC (Chlamydia outer membrane complex), and serves as the functional equivalent of peptidoglycan (By similarity).</text>
</comment>
<comment type="subunit">
    <text evidence="1">Part of a disulfide cross-linked outer membrane complex (COMC) composed of the major outer membrane porin (MOMP), the small cysteine-rich protein (OmcA) and the large cysteine-rich periplasmic protein (OmcB).</text>
</comment>
<comment type="subcellular location">
    <subcellularLocation>
        <location evidence="4">Periplasm</location>
    </subcellularLocation>
</comment>
<comment type="caution">
    <text evidence="4">Was thought to be an outer membrane protein as it is part of a disulfide cross-linked complex that is insoluble in the detergent Sarkosyl; however based on experiments in C.psittaci it is likely to be periplasmic.</text>
</comment>
<comment type="sequence caution" evidence="4">
    <conflict type="erroneous initiation">
        <sequence resource="EMBL-CDS" id="CAX10898"/>
    </conflict>
</comment>
<accession>C4PRC1</accession>
<accession>P18151</accession>
<organism>
    <name type="scientific">Chlamydia trachomatis serovar B (strain Jali20/OT)</name>
    <dbReference type="NCBI Taxonomy" id="580049"/>
    <lineage>
        <taxon>Bacteria</taxon>
        <taxon>Pseudomonadati</taxon>
        <taxon>Chlamydiota</taxon>
        <taxon>Chlamydiia</taxon>
        <taxon>Chlamydiales</taxon>
        <taxon>Chlamydiaceae</taxon>
        <taxon>Chlamydia/Chlamydophila group</taxon>
        <taxon>Chlamydia</taxon>
    </lineage>
</organism>
<reference key="1">
    <citation type="journal article" date="1989" name="FEMS Microbiol. Lett.">
        <title>Chlamydia trachomatis 60 kDa cysteine rich outer membrane protein: sequence homology between trachoma and LGV biovars.</title>
        <authorList>
            <person name="Watson M.W."/>
            <person name="Lambden P.R."/>
            <person name="Ward M.E."/>
            <person name="Clarke I.N."/>
        </authorList>
    </citation>
    <scope>NUCLEOTIDE SEQUENCE [GENOMIC DNA]</scope>
</reference>
<reference key="2">
    <citation type="journal article" date="2009" name="BMC Genomics">
        <title>Co-evolution of genomes and plasmids within Chlamydia trachomatis and the emergence in Sweden of a new variant strain.</title>
        <authorList>
            <person name="Seth-Smith H.M.B."/>
            <person name="Harris S.R."/>
            <person name="Persson K."/>
            <person name="Marsh P."/>
            <person name="Barron A."/>
            <person name="Bignell A."/>
            <person name="Bjartling C."/>
            <person name="Clark L."/>
            <person name="Cutcliffe L.T."/>
            <person name="Lambden P.R."/>
            <person name="Lennard N."/>
            <person name="Lockey S.J."/>
            <person name="Quail M.A."/>
            <person name="Salim O."/>
            <person name="Skilton R.J."/>
            <person name="Wang Y."/>
            <person name="Holland M.J."/>
            <person name="Parkhill J."/>
            <person name="Thomson N.R."/>
            <person name="Clarke I.N."/>
        </authorList>
    </citation>
    <scope>NUCLEOTIDE SEQUENCE [LARGE SCALE GENOMIC DNA]</scope>
    <source>
        <strain>Jali20/OT</strain>
    </source>
</reference>